<evidence type="ECO:0000255" key="1">
    <source>
        <dbReference type="HAMAP-Rule" id="MF_01345"/>
    </source>
</evidence>
<evidence type="ECO:0000305" key="2"/>
<name>RS17_ANAMM</name>
<dbReference type="EMBL" id="CP000030">
    <property type="protein sequence ID" value="AAV86813.1"/>
    <property type="molecule type" value="Genomic_DNA"/>
</dbReference>
<dbReference type="SMR" id="Q5PA67"/>
<dbReference type="KEGG" id="ama:AM903"/>
<dbReference type="HOGENOM" id="CLU_073626_1_1_5"/>
<dbReference type="GO" id="GO:0022627">
    <property type="term" value="C:cytosolic small ribosomal subunit"/>
    <property type="evidence" value="ECO:0007669"/>
    <property type="project" value="TreeGrafter"/>
</dbReference>
<dbReference type="GO" id="GO:0019843">
    <property type="term" value="F:rRNA binding"/>
    <property type="evidence" value="ECO:0007669"/>
    <property type="project" value="UniProtKB-UniRule"/>
</dbReference>
<dbReference type="GO" id="GO:0003735">
    <property type="term" value="F:structural constituent of ribosome"/>
    <property type="evidence" value="ECO:0007669"/>
    <property type="project" value="InterPro"/>
</dbReference>
<dbReference type="GO" id="GO:0006412">
    <property type="term" value="P:translation"/>
    <property type="evidence" value="ECO:0007669"/>
    <property type="project" value="UniProtKB-UniRule"/>
</dbReference>
<dbReference type="CDD" id="cd00364">
    <property type="entry name" value="Ribosomal_uS17"/>
    <property type="match status" value="1"/>
</dbReference>
<dbReference type="Gene3D" id="2.40.50.140">
    <property type="entry name" value="Nucleic acid-binding proteins"/>
    <property type="match status" value="1"/>
</dbReference>
<dbReference type="HAMAP" id="MF_01345_B">
    <property type="entry name" value="Ribosomal_uS17_B"/>
    <property type="match status" value="1"/>
</dbReference>
<dbReference type="InterPro" id="IPR012340">
    <property type="entry name" value="NA-bd_OB-fold"/>
</dbReference>
<dbReference type="InterPro" id="IPR000266">
    <property type="entry name" value="Ribosomal_uS17"/>
</dbReference>
<dbReference type="InterPro" id="IPR019984">
    <property type="entry name" value="Ribosomal_uS17_bact/chlr"/>
</dbReference>
<dbReference type="NCBIfam" id="NF004123">
    <property type="entry name" value="PRK05610.1"/>
    <property type="match status" value="1"/>
</dbReference>
<dbReference type="NCBIfam" id="TIGR03635">
    <property type="entry name" value="uS17_bact"/>
    <property type="match status" value="1"/>
</dbReference>
<dbReference type="PANTHER" id="PTHR10744">
    <property type="entry name" value="40S RIBOSOMAL PROTEIN S11 FAMILY MEMBER"/>
    <property type="match status" value="1"/>
</dbReference>
<dbReference type="PANTHER" id="PTHR10744:SF1">
    <property type="entry name" value="SMALL RIBOSOMAL SUBUNIT PROTEIN US17M"/>
    <property type="match status" value="1"/>
</dbReference>
<dbReference type="Pfam" id="PF00366">
    <property type="entry name" value="Ribosomal_S17"/>
    <property type="match status" value="1"/>
</dbReference>
<dbReference type="PRINTS" id="PR00973">
    <property type="entry name" value="RIBOSOMALS17"/>
</dbReference>
<dbReference type="SUPFAM" id="SSF50249">
    <property type="entry name" value="Nucleic acid-binding proteins"/>
    <property type="match status" value="1"/>
</dbReference>
<sequence>MMSKGVLVGVVTDARRDKTVKVSVYRMVHHKVYKKIVKKCRIYSVHDEHNRCKRGDVVKIREHIPVSATKRWIVVDS</sequence>
<organism>
    <name type="scientific">Anaplasma marginale (strain St. Maries)</name>
    <dbReference type="NCBI Taxonomy" id="234826"/>
    <lineage>
        <taxon>Bacteria</taxon>
        <taxon>Pseudomonadati</taxon>
        <taxon>Pseudomonadota</taxon>
        <taxon>Alphaproteobacteria</taxon>
        <taxon>Rickettsiales</taxon>
        <taxon>Anaplasmataceae</taxon>
        <taxon>Anaplasma</taxon>
    </lineage>
</organism>
<feature type="chain" id="PRO_0000255664" description="Small ribosomal subunit protein uS17">
    <location>
        <begin position="1"/>
        <end position="77"/>
    </location>
</feature>
<reference key="1">
    <citation type="journal article" date="2005" name="Proc. Natl. Acad. Sci. U.S.A.">
        <title>Complete genome sequencing of Anaplasma marginale reveals that the surface is skewed to two superfamilies of outer membrane proteins.</title>
        <authorList>
            <person name="Brayton K.A."/>
            <person name="Kappmeyer L.S."/>
            <person name="Herndon D.R."/>
            <person name="Dark M.J."/>
            <person name="Tibbals D.L."/>
            <person name="Palmer G.H."/>
            <person name="McGuire T.C."/>
            <person name="Knowles D.P. Jr."/>
        </authorList>
    </citation>
    <scope>NUCLEOTIDE SEQUENCE [LARGE SCALE GENOMIC DNA]</scope>
    <source>
        <strain>St. Maries</strain>
    </source>
</reference>
<proteinExistence type="inferred from homology"/>
<comment type="function">
    <text evidence="1">One of the primary rRNA binding proteins, it binds specifically to the 5'-end of 16S ribosomal RNA.</text>
</comment>
<comment type="subunit">
    <text evidence="1">Part of the 30S ribosomal subunit.</text>
</comment>
<comment type="similarity">
    <text evidence="1">Belongs to the universal ribosomal protein uS17 family.</text>
</comment>
<accession>Q5PA67</accession>
<protein>
    <recommendedName>
        <fullName evidence="1">Small ribosomal subunit protein uS17</fullName>
    </recommendedName>
    <alternativeName>
        <fullName evidence="2">30S ribosomal protein S17</fullName>
    </alternativeName>
</protein>
<gene>
    <name evidence="1" type="primary">rpsQ</name>
    <name type="ordered locus">AM903</name>
</gene>
<keyword id="KW-0687">Ribonucleoprotein</keyword>
<keyword id="KW-0689">Ribosomal protein</keyword>
<keyword id="KW-0694">RNA-binding</keyword>
<keyword id="KW-0699">rRNA-binding</keyword>